<dbReference type="EC" id="3.4.19.3" evidence="1"/>
<dbReference type="EMBL" id="AP006878">
    <property type="protein sequence ID" value="BAD86024.1"/>
    <property type="molecule type" value="Genomic_DNA"/>
</dbReference>
<dbReference type="RefSeq" id="WP_011250786.1">
    <property type="nucleotide sequence ID" value="NC_006624.1"/>
</dbReference>
<dbReference type="SMR" id="Q5JEL5"/>
<dbReference type="STRING" id="69014.TK1835"/>
<dbReference type="MEROPS" id="C15.001"/>
<dbReference type="EnsemblBacteria" id="BAD86024">
    <property type="protein sequence ID" value="BAD86024"/>
    <property type="gene ID" value="TK1835"/>
</dbReference>
<dbReference type="GeneID" id="78448366"/>
<dbReference type="KEGG" id="tko:TK1835"/>
<dbReference type="PATRIC" id="fig|69014.16.peg.1792"/>
<dbReference type="eggNOG" id="arCOG05850">
    <property type="taxonomic scope" value="Archaea"/>
</dbReference>
<dbReference type="HOGENOM" id="CLU_043960_4_0_2"/>
<dbReference type="InParanoid" id="Q5JEL5"/>
<dbReference type="OrthoDB" id="39672at2157"/>
<dbReference type="PhylomeDB" id="Q5JEL5"/>
<dbReference type="Proteomes" id="UP000000536">
    <property type="component" value="Chromosome"/>
</dbReference>
<dbReference type="GO" id="GO:0005829">
    <property type="term" value="C:cytosol"/>
    <property type="evidence" value="ECO:0007669"/>
    <property type="project" value="InterPro"/>
</dbReference>
<dbReference type="GO" id="GO:0016920">
    <property type="term" value="F:pyroglutamyl-peptidase activity"/>
    <property type="evidence" value="ECO:0007669"/>
    <property type="project" value="UniProtKB-UniRule"/>
</dbReference>
<dbReference type="GO" id="GO:0006508">
    <property type="term" value="P:proteolysis"/>
    <property type="evidence" value="ECO:0007669"/>
    <property type="project" value="UniProtKB-KW"/>
</dbReference>
<dbReference type="CDD" id="cd00501">
    <property type="entry name" value="Peptidase_C15"/>
    <property type="match status" value="1"/>
</dbReference>
<dbReference type="FunFam" id="3.40.630.20:FF:000001">
    <property type="entry name" value="Pyrrolidone-carboxylate peptidase"/>
    <property type="match status" value="1"/>
</dbReference>
<dbReference type="Gene3D" id="3.40.630.20">
    <property type="entry name" value="Peptidase C15, pyroglutamyl peptidase I-like"/>
    <property type="match status" value="1"/>
</dbReference>
<dbReference type="HAMAP" id="MF_00417">
    <property type="entry name" value="Pyrrolid_peptidase"/>
    <property type="match status" value="1"/>
</dbReference>
<dbReference type="InterPro" id="IPR000816">
    <property type="entry name" value="Peptidase_C15"/>
</dbReference>
<dbReference type="InterPro" id="IPR016125">
    <property type="entry name" value="Peptidase_C15-like"/>
</dbReference>
<dbReference type="InterPro" id="IPR036440">
    <property type="entry name" value="Peptidase_C15-like_sf"/>
</dbReference>
<dbReference type="InterPro" id="IPR029762">
    <property type="entry name" value="PGP-I_bact-type"/>
</dbReference>
<dbReference type="InterPro" id="IPR033694">
    <property type="entry name" value="PGPEP1_Cys_AS"/>
</dbReference>
<dbReference type="InterPro" id="IPR033693">
    <property type="entry name" value="PGPEP1_Glu_AS"/>
</dbReference>
<dbReference type="NCBIfam" id="NF009676">
    <property type="entry name" value="PRK13197.1"/>
    <property type="match status" value="1"/>
</dbReference>
<dbReference type="NCBIfam" id="TIGR00504">
    <property type="entry name" value="pyro_pdase"/>
    <property type="match status" value="1"/>
</dbReference>
<dbReference type="PANTHER" id="PTHR23402">
    <property type="entry name" value="PROTEASE FAMILY C15 PYROGLUTAMYL-PEPTIDASE I-RELATED"/>
    <property type="match status" value="1"/>
</dbReference>
<dbReference type="PANTHER" id="PTHR23402:SF1">
    <property type="entry name" value="PYROGLUTAMYL-PEPTIDASE I"/>
    <property type="match status" value="1"/>
</dbReference>
<dbReference type="Pfam" id="PF01470">
    <property type="entry name" value="Peptidase_C15"/>
    <property type="match status" value="1"/>
</dbReference>
<dbReference type="PIRSF" id="PIRSF015592">
    <property type="entry name" value="Prld-crbxl_pptds"/>
    <property type="match status" value="1"/>
</dbReference>
<dbReference type="PRINTS" id="PR00706">
    <property type="entry name" value="PYROGLUPTASE"/>
</dbReference>
<dbReference type="SUPFAM" id="SSF53182">
    <property type="entry name" value="Pyrrolidone carboxyl peptidase (pyroglutamate aminopeptidase)"/>
    <property type="match status" value="1"/>
</dbReference>
<dbReference type="PROSITE" id="PS01334">
    <property type="entry name" value="PYRASE_CYS"/>
    <property type="match status" value="1"/>
</dbReference>
<dbReference type="PROSITE" id="PS01333">
    <property type="entry name" value="PYRASE_GLU"/>
    <property type="match status" value="1"/>
</dbReference>
<name>PCP_THEKO</name>
<feature type="chain" id="PRO_0000184757" description="Pyrrolidone-carboxylate peptidase">
    <location>
        <begin position="1"/>
        <end position="206"/>
    </location>
</feature>
<feature type="active site" evidence="1">
    <location>
        <position position="78"/>
    </location>
</feature>
<feature type="active site" evidence="1">
    <location>
        <position position="141"/>
    </location>
</feature>
<feature type="active site" evidence="1">
    <location>
        <position position="165"/>
    </location>
</feature>
<protein>
    <recommendedName>
        <fullName evidence="1">Pyrrolidone-carboxylate peptidase</fullName>
        <ecNumber evidence="1">3.4.19.3</ecNumber>
    </recommendedName>
    <alternativeName>
        <fullName evidence="1">5-oxoprolyl-peptidase</fullName>
    </alternativeName>
    <alternativeName>
        <fullName evidence="1">Pyroglutamyl-peptidase I</fullName>
        <shortName evidence="1">PGP-I</shortName>
        <shortName evidence="1">Pyrase</shortName>
    </alternativeName>
</protein>
<organism>
    <name type="scientific">Thermococcus kodakarensis (strain ATCC BAA-918 / JCM 12380 / KOD1)</name>
    <name type="common">Pyrococcus kodakaraensis (strain KOD1)</name>
    <dbReference type="NCBI Taxonomy" id="69014"/>
    <lineage>
        <taxon>Archaea</taxon>
        <taxon>Methanobacteriati</taxon>
        <taxon>Methanobacteriota</taxon>
        <taxon>Thermococci</taxon>
        <taxon>Thermococcales</taxon>
        <taxon>Thermococcaceae</taxon>
        <taxon>Thermococcus</taxon>
    </lineage>
</organism>
<sequence>MKVLVTGFEPFGGEEINPSWEAVKGLPNEIEGADIIKFQLPVTFSGVREILPRLIVKERPDAVILTGQAGGRPNITVERVAINVMDSTMPDNEGYKPEDEPVFEGAPAAYFATIPVKAIVKALREAKIPAAVSNTAGTYVCNAAMFTALHTIEVSGMTTKAGFIHVPFSHEQALDKPRPSMALETIRKGLEIAIKMVFEDLTREGY</sequence>
<accession>Q5JEL5</accession>
<keyword id="KW-0963">Cytoplasm</keyword>
<keyword id="KW-0378">Hydrolase</keyword>
<keyword id="KW-0645">Protease</keyword>
<keyword id="KW-1185">Reference proteome</keyword>
<keyword id="KW-0788">Thiol protease</keyword>
<reference key="1">
    <citation type="journal article" date="2005" name="Genome Res.">
        <title>Complete genome sequence of the hyperthermophilic archaeon Thermococcus kodakaraensis KOD1 and comparison with Pyrococcus genomes.</title>
        <authorList>
            <person name="Fukui T."/>
            <person name="Atomi H."/>
            <person name="Kanai T."/>
            <person name="Matsumi R."/>
            <person name="Fujiwara S."/>
            <person name="Imanaka T."/>
        </authorList>
    </citation>
    <scope>NUCLEOTIDE SEQUENCE [LARGE SCALE GENOMIC DNA]</scope>
    <source>
        <strain>ATCC BAA-918 / JCM 12380 / KOD1</strain>
    </source>
</reference>
<gene>
    <name evidence="1" type="primary">pcp</name>
    <name type="ordered locus">TK1835</name>
</gene>
<comment type="function">
    <text evidence="1">Removes 5-oxoproline from various penultimate amino acid residues except L-proline.</text>
</comment>
<comment type="catalytic activity">
    <reaction evidence="1">
        <text>Release of an N-terminal pyroglutamyl group from a polypeptide, the second amino acid generally not being Pro.</text>
        <dbReference type="EC" id="3.4.19.3"/>
    </reaction>
</comment>
<comment type="subunit">
    <text evidence="1">Homotetramer.</text>
</comment>
<comment type="subcellular location">
    <subcellularLocation>
        <location evidence="1">Cytoplasm</location>
    </subcellularLocation>
</comment>
<comment type="similarity">
    <text evidence="1">Belongs to the peptidase C15 family.</text>
</comment>
<evidence type="ECO:0000255" key="1">
    <source>
        <dbReference type="HAMAP-Rule" id="MF_00417"/>
    </source>
</evidence>
<proteinExistence type="inferred from homology"/>